<comment type="function">
    <text evidence="1 7">Methyltransferase required for the conversion of 2-decaprenyl-6-methoxy-1,4-benzoquinol (DDMQH2) to 2-decaprenyl-3-methyl-6-methoxy-1,4-benzoquinol (DMQH2).</text>
</comment>
<comment type="catalytic activity">
    <reaction evidence="1 10">
        <text>2-methoxy-6-(all-trans-decaprenyl)benzene-1,4-diol + S-adenosyl-L-methionine = 5-methoxy-2-methyl-3-(all-trans-decaprenyl)benzene-1,4-diol + S-adenosyl-L-homocysteine + H(+)</text>
        <dbReference type="Rhea" id="RHEA:44764"/>
        <dbReference type="ChEBI" id="CHEBI:15378"/>
        <dbReference type="ChEBI" id="CHEBI:57856"/>
        <dbReference type="ChEBI" id="CHEBI:59789"/>
        <dbReference type="ChEBI" id="CHEBI:64180"/>
        <dbReference type="ChEBI" id="CHEBI:64181"/>
        <dbReference type="EC" id="2.1.1.201"/>
    </reaction>
</comment>
<comment type="pathway">
    <text evidence="1 3 7">Cofactor biosynthesis; ubiquinone biosynthesis.</text>
</comment>
<comment type="subunit">
    <text evidence="1 3 4 6">Component of a multi-subunit COQ enzyme complex, composed of at least COQ3, COQ4, COQ5, COQ6, COQ7 and COQ9 (PubMed:27499296). Interacts with PYURF; the interaction is direct, stabilizes COQ5 protein and associates PYURF with COQ enzyme complex (PubMed:35614220).</text>
</comment>
<comment type="interaction">
    <interactant intactId="EBI-12577722">
        <id>Q5HYK3</id>
    </interactant>
    <interactant intactId="EBI-10897372">
        <id>Q9NZJ6</id>
        <label>COQ3</label>
    </interactant>
    <organismsDiffer>false</organismsDiffer>
    <experiments>7</experiments>
</comment>
<comment type="interaction">
    <interactant intactId="EBI-12577722">
        <id>Q5HYK3</id>
    </interactant>
    <interactant intactId="EBI-12284865">
        <id>Q9Y3A0</id>
        <label>COQ4</label>
    </interactant>
    <organismsDiffer>false</organismsDiffer>
    <experiments>6</experiments>
</comment>
<comment type="interaction">
    <interactant intactId="EBI-12577722">
        <id>Q5HYK3</id>
    </interactant>
    <interactant intactId="EBI-718148">
        <id>Q9Y2Z9</id>
        <label>COQ6</label>
    </interactant>
    <organismsDiffer>false</organismsDiffer>
    <experiments>9</experiments>
</comment>
<comment type="interaction">
    <interactant intactId="EBI-12577722">
        <id>Q5HYK3</id>
    </interactant>
    <interactant intactId="EBI-11017131">
        <id>Q99807</id>
        <label>COQ7</label>
    </interactant>
    <organismsDiffer>false</organismsDiffer>
    <experiments>7</experiments>
</comment>
<comment type="interaction">
    <interactant intactId="EBI-12577722">
        <id>Q5HYK3</id>
    </interactant>
    <interactant intactId="EBI-724524">
        <id>O75208</id>
        <label>COQ9</label>
    </interactant>
    <organismsDiffer>false</organismsDiffer>
    <experiments>11</experiments>
</comment>
<comment type="subcellular location">
    <subcellularLocation>
        <location evidence="1 3 4 6">Mitochondrion inner membrane</location>
        <topology evidence="1 3">Peripheral membrane protein</topology>
        <orientation evidence="1 3">Matrix side</orientation>
    </subcellularLocation>
</comment>
<comment type="tissue specificity">
    <text evidence="3">Widely expressed, with highest levels in liver, lung, placenta and skeletal muscle.</text>
</comment>
<comment type="disease" evidence="5">
    <disease id="DI-05918">
        <name>Coenzyme Q10 deficiency, primary, 9</name>
        <acronym>COQ10D9</acronym>
        <description>A form of coenzyme Q10 deficiency, an autosomal recessive disorder with variable manifestations consistent with 5 major phenotypes. The phenotypes include an encephalomyopathic form with seizures and ataxia; a multisystem infantile form with encephalopathy, cardiomyopathy and renal failure; a predominantly cerebellar form with ataxia and cerebellar atrophy; Leigh syndrome with growth retardation; and an isolated myopathic form. COQ10D9 patients show cerebellar ataxia with cerebellar atrophy. Additional features include generalized tonic-clonic seizures, and cognitive disability. Disease onset is in the first decade of life.</description>
        <dbReference type="MIM" id="619028"/>
    </disease>
    <text>The disease may be caused by variants affecting the gene represented in this entry.</text>
</comment>
<comment type="similarity">
    <text evidence="1">Belongs to the class I-like SAM-binding methyltransferase superfamily. MenG/UbiE family.</text>
</comment>
<comment type="sequence caution" evidence="9">
    <conflict type="miscellaneous discrepancy">
        <sequence resource="EMBL-CDS" id="BAB71567"/>
    </conflict>
    <text>Non-canonical splice intron-exon junction.</text>
</comment>
<comment type="sequence caution" evidence="9">
    <conflict type="erroneous initiation">
        <sequence resource="EMBL-CDS" id="BAG38046"/>
    </conflict>
    <text>Truncated N-terminus.</text>
</comment>
<dbReference type="EC" id="2.1.1.201" evidence="1"/>
<dbReference type="EMBL" id="EU700459">
    <property type="protein sequence ID" value="ACD75052.1"/>
    <property type="molecule type" value="mRNA"/>
</dbReference>
<dbReference type="EMBL" id="AK057777">
    <property type="protein sequence ID" value="BAB71567.1"/>
    <property type="status" value="ALT_SEQ"/>
    <property type="molecule type" value="mRNA"/>
</dbReference>
<dbReference type="EMBL" id="AK222610">
    <property type="protein sequence ID" value="BAD96330.1"/>
    <property type="molecule type" value="mRNA"/>
</dbReference>
<dbReference type="EMBL" id="AK293656">
    <property type="protein sequence ID" value="BAG57105.1"/>
    <property type="molecule type" value="mRNA"/>
</dbReference>
<dbReference type="EMBL" id="AK315681">
    <property type="protein sequence ID" value="BAG38046.1"/>
    <property type="status" value="ALT_INIT"/>
    <property type="molecule type" value="mRNA"/>
</dbReference>
<dbReference type="EMBL" id="BX647562">
    <property type="protein sequence ID" value="CAI46073.1"/>
    <property type="molecule type" value="mRNA"/>
</dbReference>
<dbReference type="EMBL" id="CH471054">
    <property type="protein sequence ID" value="EAW98198.1"/>
    <property type="molecule type" value="Genomic_DNA"/>
</dbReference>
<dbReference type="EMBL" id="BC004916">
    <property type="protein sequence ID" value="AAH04916.2"/>
    <property type="molecule type" value="mRNA"/>
</dbReference>
<dbReference type="EMBL" id="BC107874">
    <property type="protein sequence ID" value="AAI07875.1"/>
    <property type="molecule type" value="mRNA"/>
</dbReference>
<dbReference type="CCDS" id="CCDS31912.1"/>
<dbReference type="RefSeq" id="NP_115690.3">
    <property type="nucleotide sequence ID" value="NM_032314.3"/>
</dbReference>
<dbReference type="SMR" id="Q5HYK3"/>
<dbReference type="BioGRID" id="124001">
    <property type="interactions" value="109"/>
</dbReference>
<dbReference type="ComplexPortal" id="CPX-3642">
    <property type="entry name" value="CoQ biosynthetic complex"/>
</dbReference>
<dbReference type="FunCoup" id="Q5HYK3">
    <property type="interactions" value="1111"/>
</dbReference>
<dbReference type="IntAct" id="Q5HYK3">
    <property type="interactions" value="52"/>
</dbReference>
<dbReference type="MINT" id="Q5HYK3"/>
<dbReference type="STRING" id="9606.ENSP00000288532"/>
<dbReference type="iPTMnet" id="Q5HYK3"/>
<dbReference type="PhosphoSitePlus" id="Q5HYK3"/>
<dbReference type="BioMuta" id="COQ5"/>
<dbReference type="DMDM" id="90111987"/>
<dbReference type="jPOST" id="Q5HYK3"/>
<dbReference type="MassIVE" id="Q5HYK3"/>
<dbReference type="PaxDb" id="9606-ENSP00000288532"/>
<dbReference type="PeptideAtlas" id="Q5HYK3"/>
<dbReference type="Pumba" id="Q5HYK3"/>
<dbReference type="Antibodypedia" id="45543">
    <property type="antibodies" value="105 antibodies from 20 providers"/>
</dbReference>
<dbReference type="DNASU" id="84274"/>
<dbReference type="Ensembl" id="ENST00000288532.11">
    <property type="protein sequence ID" value="ENSP00000288532.6"/>
    <property type="gene ID" value="ENSG00000110871.15"/>
</dbReference>
<dbReference type="GeneID" id="84274"/>
<dbReference type="KEGG" id="hsa:84274"/>
<dbReference type="MANE-Select" id="ENST00000288532.11">
    <property type="protein sequence ID" value="ENSP00000288532.6"/>
    <property type="RefSeq nucleotide sequence ID" value="NM_032314.4"/>
    <property type="RefSeq protein sequence ID" value="NP_115690.3"/>
</dbReference>
<dbReference type="UCSC" id="uc001tyn.4">
    <property type="organism name" value="human"/>
</dbReference>
<dbReference type="AGR" id="HGNC:28722"/>
<dbReference type="CTD" id="84274"/>
<dbReference type="DisGeNET" id="84274"/>
<dbReference type="GeneCards" id="COQ5"/>
<dbReference type="GeneReviews" id="COQ5"/>
<dbReference type="HGNC" id="HGNC:28722">
    <property type="gene designation" value="COQ5"/>
</dbReference>
<dbReference type="HPA" id="ENSG00000110871">
    <property type="expression patterns" value="Low tissue specificity"/>
</dbReference>
<dbReference type="MalaCards" id="COQ5"/>
<dbReference type="MIM" id="616359">
    <property type="type" value="gene"/>
</dbReference>
<dbReference type="MIM" id="619028">
    <property type="type" value="phenotype"/>
</dbReference>
<dbReference type="neXtProt" id="NX_Q5HYK3"/>
<dbReference type="OpenTargets" id="ENSG00000110871"/>
<dbReference type="PharmGKB" id="PA143485438"/>
<dbReference type="VEuPathDB" id="HostDB:ENSG00000110871"/>
<dbReference type="eggNOG" id="KOG1540">
    <property type="taxonomic scope" value="Eukaryota"/>
</dbReference>
<dbReference type="GeneTree" id="ENSGT00390000001654"/>
<dbReference type="InParanoid" id="Q5HYK3"/>
<dbReference type="OMA" id="MNDVMSM"/>
<dbReference type="OrthoDB" id="6329284at2759"/>
<dbReference type="PAN-GO" id="Q5HYK3">
    <property type="GO annotations" value="2 GO annotations based on evolutionary models"/>
</dbReference>
<dbReference type="PhylomeDB" id="Q5HYK3"/>
<dbReference type="TreeFam" id="TF106217"/>
<dbReference type="BioCyc" id="MetaCyc:ENSG00000110871-MONOMER"/>
<dbReference type="BRENDA" id="2.1.1.201">
    <property type="organism ID" value="2681"/>
</dbReference>
<dbReference type="PathwayCommons" id="Q5HYK3"/>
<dbReference type="Reactome" id="R-HSA-2142789">
    <property type="pathway name" value="Ubiquinol biosynthesis"/>
</dbReference>
<dbReference type="SignaLink" id="Q5HYK3"/>
<dbReference type="UniPathway" id="UPA00232"/>
<dbReference type="BioGRID-ORCS" id="84274">
    <property type="hits" value="180 hits in 1157 CRISPR screens"/>
</dbReference>
<dbReference type="ChiTaRS" id="COQ5">
    <property type="organism name" value="human"/>
</dbReference>
<dbReference type="GenomeRNAi" id="84274"/>
<dbReference type="Pharos" id="Q5HYK3">
    <property type="development level" value="Tbio"/>
</dbReference>
<dbReference type="PRO" id="PR:Q5HYK3"/>
<dbReference type="Proteomes" id="UP000005640">
    <property type="component" value="Chromosome 12"/>
</dbReference>
<dbReference type="RNAct" id="Q5HYK3">
    <property type="molecule type" value="protein"/>
</dbReference>
<dbReference type="Bgee" id="ENSG00000110871">
    <property type="expression patterns" value="Expressed in hindlimb stylopod muscle and 102 other cell types or tissues"/>
</dbReference>
<dbReference type="ExpressionAtlas" id="Q5HYK3">
    <property type="expression patterns" value="baseline and differential"/>
</dbReference>
<dbReference type="GO" id="GO:0031314">
    <property type="term" value="C:extrinsic component of mitochondrial inner membrane"/>
    <property type="evidence" value="ECO:0007669"/>
    <property type="project" value="UniProtKB-UniRule"/>
</dbReference>
<dbReference type="GO" id="GO:0005743">
    <property type="term" value="C:mitochondrial inner membrane"/>
    <property type="evidence" value="ECO:0000314"/>
    <property type="project" value="ComplexPortal"/>
</dbReference>
<dbReference type="GO" id="GO:0005759">
    <property type="term" value="C:mitochondrial matrix"/>
    <property type="evidence" value="ECO:0000314"/>
    <property type="project" value="UniProtKB"/>
</dbReference>
<dbReference type="GO" id="GO:0005739">
    <property type="term" value="C:mitochondrion"/>
    <property type="evidence" value="ECO:0006056"/>
    <property type="project" value="FlyBase"/>
</dbReference>
<dbReference type="GO" id="GO:0032991">
    <property type="term" value="C:protein-containing complex"/>
    <property type="evidence" value="ECO:0000314"/>
    <property type="project" value="UniProtKB"/>
</dbReference>
<dbReference type="GO" id="GO:0110142">
    <property type="term" value="C:ubiquinone biosynthesis complex"/>
    <property type="evidence" value="ECO:0000353"/>
    <property type="project" value="ComplexPortal"/>
</dbReference>
<dbReference type="GO" id="GO:0008425">
    <property type="term" value="F:2-methoxy-6-polyprenyl-1,4-benzoquinol methyltransferase activity"/>
    <property type="evidence" value="ECO:0000314"/>
    <property type="project" value="UniProtKB"/>
</dbReference>
<dbReference type="GO" id="GO:0032259">
    <property type="term" value="P:methylation"/>
    <property type="evidence" value="ECO:0000314"/>
    <property type="project" value="UniProtKB"/>
</dbReference>
<dbReference type="GO" id="GO:0006744">
    <property type="term" value="P:ubiquinone biosynthetic process"/>
    <property type="evidence" value="ECO:0000314"/>
    <property type="project" value="UniProtKB"/>
</dbReference>
<dbReference type="CDD" id="cd02440">
    <property type="entry name" value="AdoMet_MTases"/>
    <property type="match status" value="1"/>
</dbReference>
<dbReference type="FunFam" id="3.40.50.150:FF:000064">
    <property type="entry name" value="2-methoxy-6-polyprenyl-1,4-benzoquinol methylase, mitochondrial"/>
    <property type="match status" value="1"/>
</dbReference>
<dbReference type="Gene3D" id="3.40.50.150">
    <property type="entry name" value="Vaccinia Virus protein VP39"/>
    <property type="match status" value="1"/>
</dbReference>
<dbReference type="HAMAP" id="MF_01813">
    <property type="entry name" value="MenG_UbiE_methyltr"/>
    <property type="match status" value="1"/>
</dbReference>
<dbReference type="InterPro" id="IPR029063">
    <property type="entry name" value="SAM-dependent_MTases_sf"/>
</dbReference>
<dbReference type="InterPro" id="IPR004033">
    <property type="entry name" value="UbiE/COQ5_MeTrFase"/>
</dbReference>
<dbReference type="InterPro" id="IPR023576">
    <property type="entry name" value="UbiE/COQ5_MeTrFase_CS"/>
</dbReference>
<dbReference type="NCBIfam" id="TIGR01934">
    <property type="entry name" value="MenG_MenH_UbiE"/>
    <property type="match status" value="1"/>
</dbReference>
<dbReference type="NCBIfam" id="NF001244">
    <property type="entry name" value="PRK00216.1-5"/>
    <property type="match status" value="1"/>
</dbReference>
<dbReference type="PANTHER" id="PTHR43591:SF24">
    <property type="entry name" value="2-METHOXY-6-POLYPRENYL-1,4-BENZOQUINOL METHYLASE, MITOCHONDRIAL"/>
    <property type="match status" value="1"/>
</dbReference>
<dbReference type="PANTHER" id="PTHR43591">
    <property type="entry name" value="METHYLTRANSFERASE"/>
    <property type="match status" value="1"/>
</dbReference>
<dbReference type="Pfam" id="PF01209">
    <property type="entry name" value="Ubie_methyltran"/>
    <property type="match status" value="1"/>
</dbReference>
<dbReference type="SUPFAM" id="SSF53335">
    <property type="entry name" value="S-adenosyl-L-methionine-dependent methyltransferases"/>
    <property type="match status" value="1"/>
</dbReference>
<dbReference type="PROSITE" id="PS51608">
    <property type="entry name" value="SAM_MT_UBIE"/>
    <property type="match status" value="1"/>
</dbReference>
<dbReference type="PROSITE" id="PS01183">
    <property type="entry name" value="UBIE_1"/>
    <property type="match status" value="1"/>
</dbReference>
<dbReference type="PROSITE" id="PS01184">
    <property type="entry name" value="UBIE_2"/>
    <property type="match status" value="1"/>
</dbReference>
<gene>
    <name evidence="1 11" type="primary">COQ5</name>
</gene>
<keyword id="KW-0472">Membrane</keyword>
<keyword id="KW-0489">Methyltransferase</keyword>
<keyword id="KW-0496">Mitochondrion</keyword>
<keyword id="KW-0999">Mitochondrion inner membrane</keyword>
<keyword id="KW-1274">Primary mitochondrial disease</keyword>
<keyword id="KW-1267">Proteomics identification</keyword>
<keyword id="KW-1185">Reference proteome</keyword>
<keyword id="KW-0949">S-adenosyl-L-methionine</keyword>
<keyword id="KW-0808">Transferase</keyword>
<keyword id="KW-0809">Transit peptide</keyword>
<keyword id="KW-0831">Ubiquinone biosynthesis</keyword>
<reference key="1">
    <citation type="journal article" date="2014" name="Biochim. Biophys. Acta">
        <title>Molecular characterization of the human COQ5 C-methyltransferase in coenzyme Q10 biosynthesis.</title>
        <authorList>
            <person name="Nguyen T.P."/>
            <person name="Casarin A."/>
            <person name="Desbats M.A."/>
            <person name="Doimo M."/>
            <person name="Trevisson E."/>
            <person name="Santos-Ocana C."/>
            <person name="Navas P."/>
            <person name="Clarke C.F."/>
            <person name="Salviati L."/>
        </authorList>
    </citation>
    <scope>NUCLEOTIDE SEQUENCE [MRNA]</scope>
    <scope>VARIANT THR-152</scope>
    <scope>PATHWAY</scope>
    <scope>INTERACTION WITH COQ4</scope>
    <scope>SUBCELLULAR LOCATION</scope>
    <scope>TISSUE SPECIFICITY</scope>
    <source>
        <tissue>Skin fibroblast</tissue>
    </source>
</reference>
<reference key="2">
    <citation type="journal article" date="2004" name="Nat. Genet.">
        <title>Complete sequencing and characterization of 21,243 full-length human cDNAs.</title>
        <authorList>
            <person name="Ota T."/>
            <person name="Suzuki Y."/>
            <person name="Nishikawa T."/>
            <person name="Otsuki T."/>
            <person name="Sugiyama T."/>
            <person name="Irie R."/>
            <person name="Wakamatsu A."/>
            <person name="Hayashi K."/>
            <person name="Sato H."/>
            <person name="Nagai K."/>
            <person name="Kimura K."/>
            <person name="Makita H."/>
            <person name="Sekine M."/>
            <person name="Obayashi M."/>
            <person name="Nishi T."/>
            <person name="Shibahara T."/>
            <person name="Tanaka T."/>
            <person name="Ishii S."/>
            <person name="Yamamoto J."/>
            <person name="Saito K."/>
            <person name="Kawai Y."/>
            <person name="Isono Y."/>
            <person name="Nakamura Y."/>
            <person name="Nagahari K."/>
            <person name="Murakami K."/>
            <person name="Yasuda T."/>
            <person name="Iwayanagi T."/>
            <person name="Wagatsuma M."/>
            <person name="Shiratori A."/>
            <person name="Sudo H."/>
            <person name="Hosoiri T."/>
            <person name="Kaku Y."/>
            <person name="Kodaira H."/>
            <person name="Kondo H."/>
            <person name="Sugawara M."/>
            <person name="Takahashi M."/>
            <person name="Kanda K."/>
            <person name="Yokoi T."/>
            <person name="Furuya T."/>
            <person name="Kikkawa E."/>
            <person name="Omura Y."/>
            <person name="Abe K."/>
            <person name="Kamihara K."/>
            <person name="Katsuta N."/>
            <person name="Sato K."/>
            <person name="Tanikawa M."/>
            <person name="Yamazaki M."/>
            <person name="Ninomiya K."/>
            <person name="Ishibashi T."/>
            <person name="Yamashita H."/>
            <person name="Murakawa K."/>
            <person name="Fujimori K."/>
            <person name="Tanai H."/>
            <person name="Kimata M."/>
            <person name="Watanabe M."/>
            <person name="Hiraoka S."/>
            <person name="Chiba Y."/>
            <person name="Ishida S."/>
            <person name="Ono Y."/>
            <person name="Takiguchi S."/>
            <person name="Watanabe S."/>
            <person name="Yosida M."/>
            <person name="Hotuta T."/>
            <person name="Kusano J."/>
            <person name="Kanehori K."/>
            <person name="Takahashi-Fujii A."/>
            <person name="Hara H."/>
            <person name="Tanase T.-O."/>
            <person name="Nomura Y."/>
            <person name="Togiya S."/>
            <person name="Komai F."/>
            <person name="Hara R."/>
            <person name="Takeuchi K."/>
            <person name="Arita M."/>
            <person name="Imose N."/>
            <person name="Musashino K."/>
            <person name="Yuuki H."/>
            <person name="Oshima A."/>
            <person name="Sasaki N."/>
            <person name="Aotsuka S."/>
            <person name="Yoshikawa Y."/>
            <person name="Matsunawa H."/>
            <person name="Ichihara T."/>
            <person name="Shiohata N."/>
            <person name="Sano S."/>
            <person name="Moriya S."/>
            <person name="Momiyama H."/>
            <person name="Satoh N."/>
            <person name="Takami S."/>
            <person name="Terashima Y."/>
            <person name="Suzuki O."/>
            <person name="Nakagawa S."/>
            <person name="Senoh A."/>
            <person name="Mizoguchi H."/>
            <person name="Goto Y."/>
            <person name="Shimizu F."/>
            <person name="Wakebe H."/>
            <person name="Hishigaki H."/>
            <person name="Watanabe T."/>
            <person name="Sugiyama A."/>
            <person name="Takemoto M."/>
            <person name="Kawakami B."/>
            <person name="Yamazaki M."/>
            <person name="Watanabe K."/>
            <person name="Kumagai A."/>
            <person name="Itakura S."/>
            <person name="Fukuzumi Y."/>
            <person name="Fujimori Y."/>
            <person name="Komiyama M."/>
            <person name="Tashiro H."/>
            <person name="Tanigami A."/>
            <person name="Fujiwara T."/>
            <person name="Ono T."/>
            <person name="Yamada K."/>
            <person name="Fujii Y."/>
            <person name="Ozaki K."/>
            <person name="Hirao M."/>
            <person name="Ohmori Y."/>
            <person name="Kawabata A."/>
            <person name="Hikiji T."/>
            <person name="Kobatake N."/>
            <person name="Inagaki H."/>
            <person name="Ikema Y."/>
            <person name="Okamoto S."/>
            <person name="Okitani R."/>
            <person name="Kawakami T."/>
            <person name="Noguchi S."/>
            <person name="Itoh T."/>
            <person name="Shigeta K."/>
            <person name="Senba T."/>
            <person name="Matsumura K."/>
            <person name="Nakajima Y."/>
            <person name="Mizuno T."/>
            <person name="Morinaga M."/>
            <person name="Sasaki M."/>
            <person name="Togashi T."/>
            <person name="Oyama M."/>
            <person name="Hata H."/>
            <person name="Watanabe M."/>
            <person name="Komatsu T."/>
            <person name="Mizushima-Sugano J."/>
            <person name="Satoh T."/>
            <person name="Shirai Y."/>
            <person name="Takahashi Y."/>
            <person name="Nakagawa K."/>
            <person name="Okumura K."/>
            <person name="Nagase T."/>
            <person name="Nomura N."/>
            <person name="Kikuchi H."/>
            <person name="Masuho Y."/>
            <person name="Yamashita R."/>
            <person name="Nakai K."/>
            <person name="Yada T."/>
            <person name="Nakamura Y."/>
            <person name="Ohara O."/>
            <person name="Isogai T."/>
            <person name="Sugano S."/>
        </authorList>
    </citation>
    <scope>NUCLEOTIDE SEQUENCE [LARGE SCALE MRNA]</scope>
    <source>
        <tissue>Cerebellum</tissue>
        <tissue>Testis</tissue>
    </source>
</reference>
<reference key="3">
    <citation type="submission" date="2005-04" db="EMBL/GenBank/DDBJ databases">
        <authorList>
            <person name="Suzuki Y."/>
            <person name="Sugano S."/>
            <person name="Totoki Y."/>
            <person name="Toyoda A."/>
            <person name="Takeda T."/>
            <person name="Sakaki Y."/>
            <person name="Tanaka A."/>
            <person name="Yokoyama S."/>
        </authorList>
    </citation>
    <scope>NUCLEOTIDE SEQUENCE [LARGE SCALE MRNA]</scope>
    <scope>VARIANT THR-152</scope>
    <source>
        <tissue>Coronary artery</tissue>
    </source>
</reference>
<reference key="4">
    <citation type="journal article" date="2007" name="BMC Genomics">
        <title>The full-ORF clone resource of the German cDNA consortium.</title>
        <authorList>
            <person name="Bechtel S."/>
            <person name="Rosenfelder H."/>
            <person name="Duda A."/>
            <person name="Schmidt C.P."/>
            <person name="Ernst U."/>
            <person name="Wellenreuther R."/>
            <person name="Mehrle A."/>
            <person name="Schuster C."/>
            <person name="Bahr A."/>
            <person name="Bloecker H."/>
            <person name="Heubner D."/>
            <person name="Hoerlein A."/>
            <person name="Michel G."/>
            <person name="Wedler H."/>
            <person name="Koehrer K."/>
            <person name="Ottenwaelder B."/>
            <person name="Poustka A."/>
            <person name="Wiemann S."/>
            <person name="Schupp I."/>
        </authorList>
    </citation>
    <scope>NUCLEOTIDE SEQUENCE [LARGE SCALE MRNA]</scope>
    <source>
        <tissue>Adipose tissue</tissue>
    </source>
</reference>
<reference key="5">
    <citation type="submission" date="2005-07" db="EMBL/GenBank/DDBJ databases">
        <authorList>
            <person name="Mural R.J."/>
            <person name="Istrail S."/>
            <person name="Sutton G.G."/>
            <person name="Florea L."/>
            <person name="Halpern A.L."/>
            <person name="Mobarry C.M."/>
            <person name="Lippert R."/>
            <person name="Walenz B."/>
            <person name="Shatkay H."/>
            <person name="Dew I."/>
            <person name="Miller J.R."/>
            <person name="Flanigan M.J."/>
            <person name="Edwards N.J."/>
            <person name="Bolanos R."/>
            <person name="Fasulo D."/>
            <person name="Halldorsson B.V."/>
            <person name="Hannenhalli S."/>
            <person name="Turner R."/>
            <person name="Yooseph S."/>
            <person name="Lu F."/>
            <person name="Nusskern D.R."/>
            <person name="Shue B.C."/>
            <person name="Zheng X.H."/>
            <person name="Zhong F."/>
            <person name="Delcher A.L."/>
            <person name="Huson D.H."/>
            <person name="Kravitz S.A."/>
            <person name="Mouchard L."/>
            <person name="Reinert K."/>
            <person name="Remington K.A."/>
            <person name="Clark A.G."/>
            <person name="Waterman M.S."/>
            <person name="Eichler E.E."/>
            <person name="Adams M.D."/>
            <person name="Hunkapiller M.W."/>
            <person name="Myers E.W."/>
            <person name="Venter J.C."/>
        </authorList>
    </citation>
    <scope>NUCLEOTIDE SEQUENCE [LARGE SCALE GENOMIC DNA]</scope>
</reference>
<reference key="6">
    <citation type="journal article" date="2004" name="Genome Res.">
        <title>The status, quality, and expansion of the NIH full-length cDNA project: the Mammalian Gene Collection (MGC).</title>
        <authorList>
            <consortium name="The MGC Project Team"/>
        </authorList>
    </citation>
    <scope>NUCLEOTIDE SEQUENCE [LARGE SCALE MRNA]</scope>
    <scope>VARIANT THR-152</scope>
    <source>
        <tissue>Lung</tissue>
    </source>
</reference>
<reference key="7">
    <citation type="journal article" date="2011" name="BMC Syst. Biol.">
        <title>Initial characterization of the human central proteome.</title>
        <authorList>
            <person name="Burkard T.R."/>
            <person name="Planyavsky M."/>
            <person name="Kaupe I."/>
            <person name="Breitwieser F.P."/>
            <person name="Buerckstuemmer T."/>
            <person name="Bennett K.L."/>
            <person name="Superti-Furga G."/>
            <person name="Colinge J."/>
        </authorList>
    </citation>
    <scope>IDENTIFICATION BY MASS SPECTROMETRY [LARGE SCALE ANALYSIS]</scope>
</reference>
<reference key="8">
    <citation type="journal article" date="2014" name="J. Proteomics">
        <title>An enzyme assisted RP-RPLC approach for in-depth analysis of human liver phosphoproteome.</title>
        <authorList>
            <person name="Bian Y."/>
            <person name="Song C."/>
            <person name="Cheng K."/>
            <person name="Dong M."/>
            <person name="Wang F."/>
            <person name="Huang J."/>
            <person name="Sun D."/>
            <person name="Wang L."/>
            <person name="Ye M."/>
            <person name="Zou H."/>
        </authorList>
    </citation>
    <scope>IDENTIFICATION BY MASS SPECTROMETRY [LARGE SCALE ANALYSIS]</scope>
    <source>
        <tissue>Liver</tissue>
    </source>
</reference>
<reference key="9">
    <citation type="journal article" date="2015" name="Proteomics">
        <title>N-terminome analysis of the human mitochondrial proteome.</title>
        <authorList>
            <person name="Vaca Jacome A.S."/>
            <person name="Rabilloud T."/>
            <person name="Schaeffer-Reiss C."/>
            <person name="Rompais M."/>
            <person name="Ayoub D."/>
            <person name="Lane L."/>
            <person name="Bairoch A."/>
            <person name="Van Dorsselaer A."/>
            <person name="Carapito C."/>
        </authorList>
    </citation>
    <scope>IDENTIFICATION BY MASS SPECTROMETRY [LARGE SCALE ANALYSIS]</scope>
</reference>
<reference key="10">
    <citation type="journal article" date="2016" name="Mol. Cell">
        <title>Mitochondrial protein interaction mapping identifies regulators of respiratory chain function.</title>
        <authorList>
            <person name="Floyd B.J."/>
            <person name="Wilkerson E.M."/>
            <person name="Veling M.T."/>
            <person name="Minogue C.E."/>
            <person name="Xia C."/>
            <person name="Beebe E.T."/>
            <person name="Wrobel R.L."/>
            <person name="Cho H."/>
            <person name="Kremer L.S."/>
            <person name="Alston C.L."/>
            <person name="Gromek K.A."/>
            <person name="Dolan B.K."/>
            <person name="Ulbrich A."/>
            <person name="Stefely J.A."/>
            <person name="Bohl S.L."/>
            <person name="Werner K.M."/>
            <person name="Jochem A."/>
            <person name="Westphall M.S."/>
            <person name="Rensvold J.W."/>
            <person name="Taylor R.W."/>
            <person name="Prokisch H."/>
            <person name="Kim J.J."/>
            <person name="Coon J.J."/>
            <person name="Pagliarini D.J."/>
        </authorList>
    </citation>
    <scope>SUBCELLULAR LOCATION</scope>
    <scope>IDENTIFICATION IN THE COQ ENZYME COMPLEX</scope>
</reference>
<reference key="11">
    <citation type="journal article" date="2022" name="Nature">
        <title>Defining mitochondrial protein functions through deep multiomic profiling.</title>
        <authorList>
            <person name="Rensvold J.W."/>
            <person name="Shishkova E."/>
            <person name="Sverchkov Y."/>
            <person name="Miller I.J."/>
            <person name="Cetinkaya A."/>
            <person name="Pyle A."/>
            <person name="Manicki M."/>
            <person name="Brademan D.R."/>
            <person name="Alanay Y."/>
            <person name="Raiman J."/>
            <person name="Jochem A."/>
            <person name="Hutchins P.D."/>
            <person name="Peters S.R."/>
            <person name="Linke V."/>
            <person name="Overmyer K.A."/>
            <person name="Salome A.Z."/>
            <person name="Hebert A.S."/>
            <person name="Vincent C.E."/>
            <person name="Kwiecien N.W."/>
            <person name="Rush M.J.P."/>
            <person name="Westphall M.S."/>
            <person name="Craven M."/>
            <person name="Akarsu N.A."/>
            <person name="Taylor R.W."/>
            <person name="Coon J.J."/>
            <person name="Pagliarini D.J."/>
        </authorList>
    </citation>
    <scope>SUBCELLULAR LOCATION</scope>
    <scope>INTERACTION WITH PYURF</scope>
</reference>
<reference key="12">
    <citation type="journal article" date="2024" name="Nat. Catal.">
        <title>In vitro construction of the COQ metabolon unveils the molecular determinants of coenzyme Q biosynthesis.</title>
        <authorList>
            <person name="Nicoll C.R."/>
            <person name="Alvigini L."/>
            <person name="Gottinger A."/>
            <person name="Cecchini D."/>
            <person name="Mannucci B."/>
            <person name="Corana F."/>
            <person name="Mascotti M.L."/>
            <person name="Mattevi A."/>
        </authorList>
    </citation>
    <scope>FUNCTION</scope>
    <scope>CATALYTIC ACTIVITY</scope>
    <scope>PATHWAY</scope>
</reference>
<reference key="13">
    <citation type="journal article" date="2018" name="Hum. Mutat.">
        <title>A novel inborn error of the coenzyme Q10 biosynthesis pathway: cerebellar ataxia and static encephalomyopathy due to COQ5 C-methyltransferase deficiency.</title>
        <authorList>
            <person name="Malicdan M.C.V."/>
            <person name="Vilboux T."/>
            <person name="Ben-Zeev B."/>
            <person name="Guo J."/>
            <person name="Eliyahu A."/>
            <person name="Pode-Shakked B."/>
            <person name="Dori A."/>
            <person name="Kakani S."/>
            <person name="Chandrasekharappa S.C."/>
            <person name="Ferreira C.R."/>
            <person name="Shelestovich N."/>
            <person name="Marek-Yagel D."/>
            <person name="Pri-Chen H."/>
            <person name="Blatt I."/>
            <person name="Niederhuber J.E."/>
            <person name="He L."/>
            <person name="Toro C."/>
            <person name="Taylor R.W."/>
            <person name="Deeken J."/>
            <person name="Yardeni T."/>
            <person name="Wallace D.C."/>
            <person name="Gahl W.A."/>
            <person name="Anikster Y."/>
        </authorList>
    </citation>
    <scope>INVOLVEMENT IN COQ10D9</scope>
</reference>
<feature type="transit peptide" description="Mitochondrion" evidence="1">
    <location>
        <begin position="1"/>
        <end position="42"/>
    </location>
</feature>
<feature type="chain" id="PRO_0000228628" description="2-methoxy-6-polyprenyl-1,4-benzoquinol methylase, mitochondrial">
    <location>
        <begin position="43"/>
        <end position="327"/>
    </location>
</feature>
<feature type="binding site" evidence="1">
    <location>
        <position position="117"/>
    </location>
    <ligand>
        <name>S-adenosyl-L-methionine</name>
        <dbReference type="ChEBI" id="CHEBI:59789"/>
    </ligand>
</feature>
<feature type="binding site" evidence="1">
    <location>
        <position position="171"/>
    </location>
    <ligand>
        <name>S-adenosyl-L-methionine</name>
        <dbReference type="ChEBI" id="CHEBI:59789"/>
    </ligand>
</feature>
<feature type="binding site" evidence="1">
    <location>
        <begin position="199"/>
        <end position="200"/>
    </location>
    <ligand>
        <name>S-adenosyl-L-methionine</name>
        <dbReference type="ChEBI" id="CHEBI:59789"/>
    </ligand>
</feature>
<feature type="sequence variant" id="VAR_025702" description="In dbSNP:rs3742049." evidence="2 3 8">
    <original>A</original>
    <variation>T</variation>
    <location>
        <position position="152"/>
    </location>
</feature>
<feature type="sequence conflict" description="In Ref. 4; CAI46073." evidence="9" ref="4">
    <original>K</original>
    <variation>R</variation>
    <location>
        <position position="78"/>
    </location>
</feature>
<feature type="sequence conflict" description="In Ref. 2; BAG38046." evidence="9" ref="2">
    <original>D</original>
    <variation>G</variation>
    <location>
        <position position="171"/>
    </location>
</feature>
<feature type="sequence conflict" description="In Ref. 6; AAH04916." evidence="9" ref="6">
    <original>F</original>
    <variation>S</variation>
    <location>
        <position position="291"/>
    </location>
</feature>
<sequence length="327" mass="37140">MAAPGSCALWSYCGRGWSRAMRGCQLLGLRSSWPGDLLSARLLSQEKRAAETHFGFETVSEEEKGGKVYQVFESVAKKYDVMNDMMSLGIHRVWKDLLLWKMHPLPGTQLLDVAGGTGDIAFRFLNYVQSQHQRKQKRQLRAQQNLSWEEIAKEYQNEEDSLGGSRVVVCDINKEMLKVGKQKALAQGYRAGLAWVLGDAEELPFDDDKFDIYTIAFGIRNVTHIDQALQEAHRVLKPGGRFLCLEFSQVNNPLISRLYDLYSFQVIPVLGEVIAGDWKSYQYLVESIRRFPSQEEFKDMIEDAGFHKVTYESLTSGIVAIHSGFKL</sequence>
<organism>
    <name type="scientific">Homo sapiens</name>
    <name type="common">Human</name>
    <dbReference type="NCBI Taxonomy" id="9606"/>
    <lineage>
        <taxon>Eukaryota</taxon>
        <taxon>Metazoa</taxon>
        <taxon>Chordata</taxon>
        <taxon>Craniata</taxon>
        <taxon>Vertebrata</taxon>
        <taxon>Euteleostomi</taxon>
        <taxon>Mammalia</taxon>
        <taxon>Eutheria</taxon>
        <taxon>Euarchontoglires</taxon>
        <taxon>Primates</taxon>
        <taxon>Haplorrhini</taxon>
        <taxon>Catarrhini</taxon>
        <taxon>Hominidae</taxon>
        <taxon>Homo</taxon>
    </lineage>
</organism>
<name>COQ5_HUMAN</name>
<proteinExistence type="evidence at protein level"/>
<evidence type="ECO:0000255" key="1">
    <source>
        <dbReference type="HAMAP-Rule" id="MF_03191"/>
    </source>
</evidence>
<evidence type="ECO:0000269" key="2">
    <source>
    </source>
</evidence>
<evidence type="ECO:0000269" key="3">
    <source>
    </source>
</evidence>
<evidence type="ECO:0000269" key="4">
    <source>
    </source>
</evidence>
<evidence type="ECO:0000269" key="5">
    <source>
    </source>
</evidence>
<evidence type="ECO:0000269" key="6">
    <source>
    </source>
</evidence>
<evidence type="ECO:0000269" key="7">
    <source>
    </source>
</evidence>
<evidence type="ECO:0000269" key="8">
    <source ref="3"/>
</evidence>
<evidence type="ECO:0000305" key="9"/>
<evidence type="ECO:0000305" key="10">
    <source>
    </source>
</evidence>
<evidence type="ECO:0000312" key="11">
    <source>
        <dbReference type="HGNC" id="HGNC:28722"/>
    </source>
</evidence>
<protein>
    <recommendedName>
        <fullName evidence="1">2-methoxy-6-polyprenyl-1,4-benzoquinol methylase, mitochondrial</fullName>
        <ecNumber evidence="1">2.1.1.201</ecNumber>
    </recommendedName>
    <alternativeName>
        <fullName evidence="1">Ubiquinone biosynthesis methyltransferase COQ5</fullName>
    </alternativeName>
</protein>
<accession>Q5HYK3</accession>
<accession>B2RDU9</accession>
<accession>B3GK62</accession>
<accession>B4DEJ4</accession>
<accession>Q32Q28</accession>
<accession>Q53HH0</accession>
<accession>Q96LV1</accession>
<accession>Q9BSP8</accession>